<dbReference type="GO" id="GO:0005576">
    <property type="term" value="C:extracellular region"/>
    <property type="evidence" value="ECO:0007669"/>
    <property type="project" value="UniProtKB-SubCell"/>
</dbReference>
<dbReference type="GO" id="GO:0042742">
    <property type="term" value="P:defense response to bacterium"/>
    <property type="evidence" value="ECO:0007669"/>
    <property type="project" value="UniProtKB-KW"/>
</dbReference>
<dbReference type="GO" id="GO:0045087">
    <property type="term" value="P:innate immune response"/>
    <property type="evidence" value="ECO:0007669"/>
    <property type="project" value="UniProtKB-KW"/>
</dbReference>
<dbReference type="InterPro" id="IPR013157">
    <property type="entry name" value="Aurein_antimicrobial_peptide"/>
</dbReference>
<dbReference type="Pfam" id="PF08256">
    <property type="entry name" value="Antimicrobial20"/>
    <property type="match status" value="1"/>
</dbReference>
<proteinExistence type="evidence at protein level"/>
<evidence type="ECO:0000250" key="1">
    <source>
        <dbReference type="UniProtKB" id="P81835"/>
    </source>
</evidence>
<evidence type="ECO:0000269" key="2">
    <source>
    </source>
</evidence>
<evidence type="ECO:0000269" key="3">
    <source>
    </source>
</evidence>
<evidence type="ECO:0000303" key="4">
    <source>
    </source>
</evidence>
<evidence type="ECO:0000303" key="5">
    <source>
    </source>
</evidence>
<evidence type="ECO:0000305" key="6"/>
<evidence type="ECO:0000305" key="7">
    <source>
    </source>
</evidence>
<name>AUR11_RANRN</name>
<accession>P82386</accession>
<comment type="function">
    <text evidence="1 2 3">Antimicrobial peptide with activity against B.cereus, L.lactis, L.innocua and S.uberis (PubMed:10951191). Probably acts by disturbing membrane functions with its amphipathic structure (PubMed:10951191). Inhibits the formation of NO by neuronal nitric oxide synthase (nNOS) at micromolar concentrations (PubMed:11784303). Acts by a non-competitive mechanism, probably by binding to calcium/calmodulin and as a consequence blocking calmodulin attachment to nNOS (By similarity).</text>
</comment>
<comment type="subcellular location">
    <subcellularLocation>
        <location evidence="2">Secreted</location>
    </subcellularLocation>
</comment>
<comment type="tissue specificity">
    <text evidence="7">Expressed by the skin dorsal glands.</text>
</comment>
<comment type="similarity">
    <text evidence="6">Belongs to the frog skin active peptide (FSAP) family. Aurein subfamily.</text>
</comment>
<feature type="peptide" id="PRO_0000043718" description="Aurein-1.1" evidence="2">
    <location>
        <begin position="1"/>
        <end position="13"/>
    </location>
</feature>
<feature type="modified residue" description="Isoleucine amide" evidence="2">
    <location>
        <position position="13"/>
    </location>
</feature>
<reference key="1">
    <citation type="journal article" date="2000" name="Eur. J. Biochem.">
        <title>The antibiotic and anticancer active aurein peptides from the australian bell frogs Litoria aurea and Litoria raniformis the solution structure of aurein 1.2.</title>
        <authorList>
            <person name="Rozek T."/>
            <person name="Wegener K.L."/>
            <person name="Bowie J.H."/>
            <person name="Olver I.N."/>
            <person name="Carver J.A."/>
            <person name="Wallace J.C."/>
            <person name="Tyler M.J."/>
        </authorList>
    </citation>
    <scope>PROTEIN SEQUENCE</scope>
    <scope>AMIDATION AT ILE-13</scope>
    <scope>FUNCTION</scope>
    <scope>SUBCELLULAR LOCATION</scope>
    <source>
        <tissue>Skin secretion</tissue>
    </source>
</reference>
<reference key="2">
    <citation type="journal article" date="2002" name="Eur. J. Biochem.">
        <title>Amphibian peptides that inhibit neuronal nitric oxide synthase. Isolation of lesuerin from the skin secretion of the Australian stony creek frog Litoria lesueuri.</title>
        <authorList>
            <person name="Doyle J."/>
            <person name="Llewellyn L.E."/>
            <person name="Brinkworth C.S."/>
            <person name="Bowie J.H."/>
            <person name="Wegener K.L."/>
            <person name="Rozek T."/>
            <person name="Wabnitz P.A."/>
            <person name="Wallace J.C."/>
            <person name="Tyler M.J."/>
        </authorList>
    </citation>
    <scope>FUNCTION</scope>
</reference>
<sequence length="13" mass="1447">GLFDIIKKIAESI</sequence>
<protein>
    <recommendedName>
        <fullName evidence="4 5">Aurein-1.1</fullName>
    </recommendedName>
</protein>
<organism>
    <name type="scientific">Ranoidea raniformis</name>
    <name type="common">Southern bell frog</name>
    <name type="synonym">Litoria raniformis</name>
    <dbReference type="NCBI Taxonomy" id="116057"/>
    <lineage>
        <taxon>Eukaryota</taxon>
        <taxon>Metazoa</taxon>
        <taxon>Chordata</taxon>
        <taxon>Craniata</taxon>
        <taxon>Vertebrata</taxon>
        <taxon>Euteleostomi</taxon>
        <taxon>Amphibia</taxon>
        <taxon>Batrachia</taxon>
        <taxon>Anura</taxon>
        <taxon>Neobatrachia</taxon>
        <taxon>Hyloidea</taxon>
        <taxon>Hylidae</taxon>
        <taxon>Pelodryadinae</taxon>
        <taxon>Ranoidea</taxon>
    </lineage>
</organism>
<keyword id="KW-0027">Amidation</keyword>
<keyword id="KW-0878">Amphibian defense peptide</keyword>
<keyword id="KW-0044">Antibiotic</keyword>
<keyword id="KW-0929">Antimicrobial</keyword>
<keyword id="KW-0903">Direct protein sequencing</keyword>
<keyword id="KW-0391">Immunity</keyword>
<keyword id="KW-0399">Innate immunity</keyword>
<keyword id="KW-0964">Secreted</keyword>